<dbReference type="EC" id="3.4.21.90" evidence="2"/>
<dbReference type="EMBL" id="L00930">
    <property type="protein sequence ID" value="AAC19325.1"/>
    <property type="molecule type" value="Genomic_RNA"/>
</dbReference>
<dbReference type="PIR" id="D44213">
    <property type="entry name" value="D44213"/>
</dbReference>
<dbReference type="SMR" id="P36329"/>
<dbReference type="MEROPS" id="S03.001"/>
<dbReference type="Proteomes" id="UP000008299">
    <property type="component" value="Segment"/>
</dbReference>
<dbReference type="GO" id="GO:0030430">
    <property type="term" value="C:host cell cytoplasm"/>
    <property type="evidence" value="ECO:0007669"/>
    <property type="project" value="UniProtKB-SubCell"/>
</dbReference>
<dbReference type="GO" id="GO:0042025">
    <property type="term" value="C:host cell nucleus"/>
    <property type="evidence" value="ECO:0007669"/>
    <property type="project" value="UniProtKB-SubCell"/>
</dbReference>
<dbReference type="GO" id="GO:0020002">
    <property type="term" value="C:host cell plasma membrane"/>
    <property type="evidence" value="ECO:0007669"/>
    <property type="project" value="UniProtKB-SubCell"/>
</dbReference>
<dbReference type="GO" id="GO:0016020">
    <property type="term" value="C:membrane"/>
    <property type="evidence" value="ECO:0007669"/>
    <property type="project" value="UniProtKB-KW"/>
</dbReference>
<dbReference type="GO" id="GO:0039619">
    <property type="term" value="C:T=4 icosahedral viral capsid"/>
    <property type="evidence" value="ECO:0007669"/>
    <property type="project" value="UniProtKB-KW"/>
</dbReference>
<dbReference type="GO" id="GO:0019031">
    <property type="term" value="C:viral envelope"/>
    <property type="evidence" value="ECO:0007669"/>
    <property type="project" value="UniProtKB-KW"/>
</dbReference>
<dbReference type="GO" id="GO:0055036">
    <property type="term" value="C:virion membrane"/>
    <property type="evidence" value="ECO:0007669"/>
    <property type="project" value="UniProtKB-SubCell"/>
</dbReference>
<dbReference type="GO" id="GO:0003723">
    <property type="term" value="F:RNA binding"/>
    <property type="evidence" value="ECO:0007669"/>
    <property type="project" value="UniProtKB-KW"/>
</dbReference>
<dbReference type="GO" id="GO:0004252">
    <property type="term" value="F:serine-type endopeptidase activity"/>
    <property type="evidence" value="ECO:0007669"/>
    <property type="project" value="InterPro"/>
</dbReference>
<dbReference type="GO" id="GO:0005198">
    <property type="term" value="F:structural molecule activity"/>
    <property type="evidence" value="ECO:0007669"/>
    <property type="project" value="InterPro"/>
</dbReference>
<dbReference type="GO" id="GO:0075512">
    <property type="term" value="P:clathrin-dependent endocytosis of virus by host cell"/>
    <property type="evidence" value="ECO:0007669"/>
    <property type="project" value="UniProtKB-KW"/>
</dbReference>
<dbReference type="GO" id="GO:0039654">
    <property type="term" value="P:fusion of virus membrane with host endosome membrane"/>
    <property type="evidence" value="ECO:0007669"/>
    <property type="project" value="UniProtKB-KW"/>
</dbReference>
<dbReference type="GO" id="GO:0006508">
    <property type="term" value="P:proteolysis"/>
    <property type="evidence" value="ECO:0007669"/>
    <property type="project" value="UniProtKB-KW"/>
</dbReference>
<dbReference type="GO" id="GO:0039657">
    <property type="term" value="P:symbiont-mediated suppression of host gene expression"/>
    <property type="evidence" value="ECO:0007669"/>
    <property type="project" value="UniProtKB-KW"/>
</dbReference>
<dbReference type="GO" id="GO:0039722">
    <property type="term" value="P:symbiont-mediated suppression of host toll-like receptor signaling pathway"/>
    <property type="evidence" value="ECO:0000250"/>
    <property type="project" value="UniProtKB"/>
</dbReference>
<dbReference type="GO" id="GO:0019062">
    <property type="term" value="P:virion attachment to host cell"/>
    <property type="evidence" value="ECO:0007669"/>
    <property type="project" value="UniProtKB-KW"/>
</dbReference>
<dbReference type="FunFam" id="1.10.287.2230:FF:000001">
    <property type="entry name" value="Structural polyprotein"/>
    <property type="match status" value="1"/>
</dbReference>
<dbReference type="FunFam" id="2.40.10.10:FF:000075">
    <property type="entry name" value="Structural polyprotein"/>
    <property type="match status" value="1"/>
</dbReference>
<dbReference type="FunFam" id="2.40.10.10:FF:000076">
    <property type="entry name" value="Structural polyprotein"/>
    <property type="match status" value="1"/>
</dbReference>
<dbReference type="FunFam" id="2.60.40.350:FF:000002">
    <property type="entry name" value="Structural polyprotein"/>
    <property type="match status" value="1"/>
</dbReference>
<dbReference type="FunFam" id="2.60.98.10:FF:000002">
    <property type="entry name" value="Structural polyprotein"/>
    <property type="match status" value="1"/>
</dbReference>
<dbReference type="FunFam" id="2.60.98.10:FF:000003">
    <property type="entry name" value="Structural polyprotein"/>
    <property type="match status" value="1"/>
</dbReference>
<dbReference type="Gene3D" id="1.10.287.2230">
    <property type="match status" value="1"/>
</dbReference>
<dbReference type="Gene3D" id="2.60.40.350">
    <property type="match status" value="1"/>
</dbReference>
<dbReference type="Gene3D" id="2.60.40.3200">
    <property type="entry name" value="Alphavirus E2 glycoprotein, A domain"/>
    <property type="match status" value="1"/>
</dbReference>
<dbReference type="Gene3D" id="2.60.40.4310">
    <property type="entry name" value="Alphavirus E2 glycoprotein, domain B"/>
    <property type="match status" value="1"/>
</dbReference>
<dbReference type="Gene3D" id="2.60.40.2400">
    <property type="entry name" value="Alphavirus E2 glycoprotein, domain C"/>
    <property type="match status" value="1"/>
</dbReference>
<dbReference type="Gene3D" id="2.60.98.10">
    <property type="entry name" value="Tick-borne Encephalitis virus Glycoprotein, domain 1"/>
    <property type="match status" value="3"/>
</dbReference>
<dbReference type="Gene3D" id="2.40.10.10">
    <property type="entry name" value="Trypsin-like serine proteases"/>
    <property type="match status" value="2"/>
</dbReference>
<dbReference type="InterPro" id="IPR002548">
    <property type="entry name" value="Alpha_E1_glycop"/>
</dbReference>
<dbReference type="InterPro" id="IPR000936">
    <property type="entry name" value="Alpha_E2_glycop"/>
</dbReference>
<dbReference type="InterPro" id="IPR002533">
    <property type="entry name" value="Alpha_E3_glycop"/>
</dbReference>
<dbReference type="InterPro" id="IPR042304">
    <property type="entry name" value="Alphavir_E2_A"/>
</dbReference>
<dbReference type="InterPro" id="IPR042305">
    <property type="entry name" value="Alphavir_E2_B"/>
</dbReference>
<dbReference type="InterPro" id="IPR042306">
    <property type="entry name" value="Alphavir_E2_C"/>
</dbReference>
<dbReference type="InterPro" id="IPR000336">
    <property type="entry name" value="Flavivir/Alphavir_Ig-like_sf"/>
</dbReference>
<dbReference type="InterPro" id="IPR036253">
    <property type="entry name" value="Glycoprot_cen/dimer_sf"/>
</dbReference>
<dbReference type="InterPro" id="IPR038055">
    <property type="entry name" value="Glycoprot_E_dimer_dom"/>
</dbReference>
<dbReference type="InterPro" id="IPR014756">
    <property type="entry name" value="Ig_E-set"/>
</dbReference>
<dbReference type="InterPro" id="IPR009003">
    <property type="entry name" value="Peptidase_S1_PA"/>
</dbReference>
<dbReference type="InterPro" id="IPR043504">
    <property type="entry name" value="Peptidase_S1_PA_chymotrypsin"/>
</dbReference>
<dbReference type="InterPro" id="IPR000930">
    <property type="entry name" value="Peptidase_S3"/>
</dbReference>
<dbReference type="Pfam" id="PF01589">
    <property type="entry name" value="Alpha_E1_glycop"/>
    <property type="match status" value="1"/>
</dbReference>
<dbReference type="Pfam" id="PF00943">
    <property type="entry name" value="Alpha_E2_glycop"/>
    <property type="match status" value="1"/>
</dbReference>
<dbReference type="Pfam" id="PF01563">
    <property type="entry name" value="Alpha_E3_glycop"/>
    <property type="match status" value="1"/>
</dbReference>
<dbReference type="Pfam" id="PF00944">
    <property type="entry name" value="Peptidase_S3"/>
    <property type="match status" value="1"/>
</dbReference>
<dbReference type="PRINTS" id="PR00798">
    <property type="entry name" value="TOGAVIRIN"/>
</dbReference>
<dbReference type="SUPFAM" id="SSF81296">
    <property type="entry name" value="E set domains"/>
    <property type="match status" value="1"/>
</dbReference>
<dbReference type="SUPFAM" id="SSF50494">
    <property type="entry name" value="Trypsin-like serine proteases"/>
    <property type="match status" value="1"/>
</dbReference>
<dbReference type="SUPFAM" id="SSF56983">
    <property type="entry name" value="Viral glycoprotein, central and dimerisation domains"/>
    <property type="match status" value="1"/>
</dbReference>
<dbReference type="PROSITE" id="PS51690">
    <property type="entry name" value="ALPHAVIRUS_CP"/>
    <property type="match status" value="1"/>
</dbReference>
<feature type="chain" id="PRO_0000041251" description="Capsid protein">
    <location>
        <begin position="1"/>
        <end position="275"/>
    </location>
</feature>
<feature type="chain" id="PRO_0000234318" description="Precursor of protein E3/E2">
    <location>
        <begin position="276"/>
        <end position="757"/>
    </location>
</feature>
<feature type="chain" id="PRO_0000041252" description="Assembly protein E3">
    <location>
        <begin position="276"/>
        <end position="334"/>
    </location>
</feature>
<feature type="chain" id="PRO_0000041253" description="Spike glycoprotein E2">
    <location>
        <begin position="335"/>
        <end position="757"/>
    </location>
</feature>
<feature type="chain" id="PRO_0000041254" description="6K protein">
    <location>
        <begin position="758"/>
        <end position="813"/>
    </location>
</feature>
<feature type="chain" id="PRO_0000041255" description="Spike glycoprotein E1">
    <location>
        <begin position="814"/>
        <end position="1255"/>
    </location>
</feature>
<feature type="topological domain" description="Extracellular" evidence="12">
    <location>
        <begin position="276"/>
        <end position="701"/>
    </location>
</feature>
<feature type="transmembrane region" description="Helical" evidence="12">
    <location>
        <begin position="702"/>
        <end position="722"/>
    </location>
</feature>
<feature type="topological domain" description="Cytoplasmic" evidence="12">
    <location>
        <begin position="723"/>
        <end position="757"/>
    </location>
</feature>
<feature type="topological domain" description="Extracellular" evidence="12">
    <location>
        <begin position="758"/>
        <end position="772"/>
    </location>
</feature>
<feature type="transmembrane region" description="Helical" evidence="12">
    <location>
        <begin position="773"/>
        <end position="793"/>
    </location>
</feature>
<feature type="topological domain" description="Cytoplasmic" evidence="12">
    <location>
        <position position="794"/>
    </location>
</feature>
<feature type="transmembrane region" description="Helical" evidence="12">
    <location>
        <begin position="795"/>
        <end position="815"/>
    </location>
</feature>
<feature type="topological domain" description="Extracellular" evidence="12">
    <location>
        <begin position="816"/>
        <end position="1225"/>
    </location>
</feature>
<feature type="transmembrane region" description="Helical" evidence="12">
    <location>
        <begin position="1226"/>
        <end position="1246"/>
    </location>
</feature>
<feature type="topological domain" description="Cytoplasmic" evidence="12">
    <location>
        <begin position="1247"/>
        <end position="1255"/>
    </location>
</feature>
<feature type="domain" description="Peptidase S3" evidence="13">
    <location>
        <begin position="126"/>
        <end position="275"/>
    </location>
</feature>
<feature type="region of interest" description="Necessary for nucleocapsid assembly and virus assembly" evidence="5">
    <location>
        <begin position="1"/>
        <end position="33"/>
    </location>
</feature>
<feature type="region of interest" description="Host transcription inhibition" evidence="5">
    <location>
        <begin position="33"/>
        <end position="68"/>
    </location>
</feature>
<feature type="region of interest" description="Disordered" evidence="14">
    <location>
        <begin position="44"/>
        <end position="119"/>
    </location>
</feature>
<feature type="region of interest" description="Binding to the viral RNA" evidence="7">
    <location>
        <begin position="91"/>
        <end position="127"/>
    </location>
</feature>
<feature type="region of interest" description="Ribosome-binding" evidence="7">
    <location>
        <begin position="112"/>
        <end position="126"/>
    </location>
</feature>
<feature type="region of interest" description="Interaction with spike glycoprotein E2" evidence="3">
    <location>
        <begin position="168"/>
        <end position="173"/>
    </location>
</feature>
<feature type="region of interest" description="Interaction with spike glycoprotein E2" evidence="3">
    <location>
        <begin position="260"/>
        <end position="264"/>
    </location>
</feature>
<feature type="region of interest" description="Functions as an uncleaved signal peptide for the precursor of protein E3/E2" evidence="2">
    <location>
        <begin position="276"/>
        <end position="287"/>
    </location>
</feature>
<feature type="region of interest" description="Interaction with the capsid protein" evidence="3">
    <location>
        <begin position="725"/>
        <end position="729"/>
    </location>
</feature>
<feature type="region of interest" description="Transient transmembrane before p62-6K protein processing" evidence="12">
    <location>
        <begin position="730"/>
        <end position="750"/>
    </location>
</feature>
<feature type="region of interest" description="E1 fusion peptide loop" evidence="11">
    <location>
        <begin position="897"/>
        <end position="914"/>
    </location>
</feature>
<feature type="short sequence motif" description="Supraphysiological nuclear export signal" evidence="5">
    <location>
        <begin position="41"/>
        <end position="48"/>
    </location>
</feature>
<feature type="short sequence motif" description="Nuclear localization signal" evidence="5">
    <location>
        <begin position="64"/>
        <end position="68"/>
    </location>
</feature>
<feature type="compositionally biased region" description="Basic residues" evidence="14">
    <location>
        <begin position="80"/>
        <end position="92"/>
    </location>
</feature>
<feature type="compositionally biased region" description="Basic residues" evidence="14">
    <location>
        <begin position="104"/>
        <end position="118"/>
    </location>
</feature>
<feature type="active site" description="Charge relay system" evidence="13">
    <location>
        <position position="152"/>
    </location>
</feature>
<feature type="active site" description="Charge relay system" evidence="13">
    <location>
        <position position="174"/>
    </location>
</feature>
<feature type="active site" description="Charge relay system" evidence="13">
    <location>
        <position position="226"/>
    </location>
</feature>
<feature type="site" description="Involved in dimerization of the capsid protein" evidence="10">
    <location>
        <position position="200"/>
    </location>
</feature>
<feature type="site" description="Involved in dimerization of the capsid protein" evidence="10">
    <location>
        <position position="233"/>
    </location>
</feature>
<feature type="site" description="Cleavage; by autolysis" evidence="2">
    <location>
        <begin position="275"/>
        <end position="276"/>
    </location>
</feature>
<feature type="site" description="Cleavage; by host furin" evidence="2">
    <location>
        <begin position="334"/>
        <end position="335"/>
    </location>
</feature>
<feature type="site" description="Cleavage; by host signal peptidase" evidence="2">
    <location>
        <begin position="757"/>
        <end position="758"/>
    </location>
</feature>
<feature type="site" description="Cleavage; by host signal peptidase" evidence="2">
    <location>
        <begin position="813"/>
        <end position="814"/>
    </location>
</feature>
<feature type="modified residue" description="Phosphothreonine" evidence="5">
    <location>
        <position position="93"/>
    </location>
</feature>
<feature type="modified residue" description="Phosphothreonine" evidence="5">
    <location>
        <position position="108"/>
    </location>
</feature>
<feature type="modified residue" description="Phosphoserine" evidence="5">
    <location>
        <position position="124"/>
    </location>
</feature>
<feature type="modified residue" description="Phosphothreonine" evidence="5">
    <location>
        <position position="127"/>
    </location>
</feature>
<feature type="lipid moiety-binding region" description="S-palmitoyl cysteine; by host" evidence="3">
    <location>
        <position position="730"/>
    </location>
</feature>
<feature type="lipid moiety-binding region" description="S-palmitoyl cysteine; by host" evidence="9">
    <location>
        <position position="750"/>
    </location>
</feature>
<feature type="lipid moiety-binding region" description="S-palmitoyl cysteine; by host" evidence="9">
    <location>
        <position position="751"/>
    </location>
</feature>
<feature type="glycosylation site" description="N-linked (GlcNAc...) asparagine; by host" evidence="12">
    <location>
        <position position="47"/>
    </location>
</feature>
<feature type="glycosylation site" description="N-linked (GlcNAc...) asparagine; by host" evidence="12">
    <location>
        <position position="286"/>
    </location>
</feature>
<feature type="glycosylation site" description="N-linked (GlcNAc...) asparagine; by host" evidence="12">
    <location>
        <position position="652"/>
    </location>
</feature>
<feature type="glycosylation site" description="N-linked (GlcNAc...) asparagine; by host" evidence="12">
    <location>
        <position position="947"/>
    </location>
</feature>
<feature type="glycosylation site" description="N-linked (GlcNAc...) asparagine; by host" evidence="9">
    <location>
        <position position="1083"/>
    </location>
</feature>
<feature type="disulfide bond" evidence="4">
    <location>
        <begin position="282"/>
        <end position="291"/>
    </location>
</feature>
<feature type="disulfide bond" evidence="6">
    <location>
        <begin position="353"/>
        <end position="457"/>
    </location>
</feature>
<feature type="disulfide bond" evidence="6">
    <location>
        <begin position="356"/>
        <end position="361"/>
    </location>
</feature>
<feature type="disulfide bond" evidence="6">
    <location>
        <begin position="424"/>
        <end position="438"/>
    </location>
</feature>
<feature type="disulfide bond" evidence="6">
    <location>
        <begin position="485"/>
        <end position="600"/>
    </location>
</feature>
<feature type="disulfide bond" evidence="6">
    <location>
        <begin position="534"/>
        <end position="560"/>
    </location>
</feature>
<feature type="disulfide bond" evidence="6">
    <location>
        <begin position="536"/>
        <end position="554"/>
    </location>
</feature>
<feature type="disulfide bond" evidence="8">
    <location>
        <begin position="730"/>
        <end position="751"/>
    </location>
</feature>
<feature type="disulfide bond" evidence="6">
    <location>
        <begin position="862"/>
        <end position="927"/>
    </location>
</feature>
<feature type="disulfide bond" evidence="6">
    <location>
        <begin position="875"/>
        <end position="907"/>
    </location>
</feature>
<feature type="disulfide bond" evidence="6">
    <location>
        <begin position="876"/>
        <end position="909"/>
    </location>
</feature>
<feature type="disulfide bond" evidence="6">
    <location>
        <begin position="881"/>
        <end position="891"/>
    </location>
</feature>
<feature type="disulfide bond" evidence="6">
    <location>
        <begin position="1072"/>
        <end position="1084"/>
    </location>
</feature>
<feature type="disulfide bond" evidence="6">
    <location>
        <begin position="1114"/>
        <end position="1189"/>
    </location>
</feature>
<feature type="disulfide bond" evidence="6">
    <location>
        <begin position="1119"/>
        <end position="1193"/>
    </location>
</feature>
<feature type="disulfide bond" evidence="1">
    <location>
        <begin position="1141"/>
        <end position="1183"/>
    </location>
</feature>
<protein>
    <recommendedName>
        <fullName>Structural polyprotein</fullName>
    </recommendedName>
    <alternativeName>
        <fullName>p130</fullName>
    </alternativeName>
    <component>
        <recommendedName>
            <fullName>Capsid protein</fullName>
            <ecNumber evidence="2">3.4.21.90</ecNumber>
        </recommendedName>
        <alternativeName>
            <fullName>Coat protein</fullName>
            <shortName>C</shortName>
        </alternativeName>
    </component>
    <component>
        <recommendedName>
            <fullName>Precursor of protein E3/E2</fullName>
        </recommendedName>
        <alternativeName>
            <fullName>p62</fullName>
        </alternativeName>
        <alternativeName>
            <fullName>pE2</fullName>
        </alternativeName>
    </component>
    <component>
        <recommendedName>
            <fullName>Assembly protein E3</fullName>
        </recommendedName>
    </component>
    <component>
        <recommendedName>
            <fullName>Spike glycoprotein E2</fullName>
        </recommendedName>
        <alternativeName>
            <fullName>E2 envelope glycoprotein</fullName>
        </alternativeName>
    </component>
    <component>
        <recommendedName>
            <fullName>6K protein</fullName>
        </recommendedName>
    </component>
    <component>
        <recommendedName>
            <fullName>Spike glycoprotein E1</fullName>
        </recommendedName>
        <alternativeName>
            <fullName>E1 envelope glycoprotein</fullName>
        </alternativeName>
    </component>
</protein>
<organism>
    <name type="scientific">Venezuelan equine encephalitis virus (strain 3880)</name>
    <name type="common">VEEV</name>
    <dbReference type="NCBI Taxonomy" id="36382"/>
    <lineage>
        <taxon>Viruses</taxon>
        <taxon>Riboviria</taxon>
        <taxon>Orthornavirae</taxon>
        <taxon>Kitrinoviricota</taxon>
        <taxon>Alsuviricetes</taxon>
        <taxon>Martellivirales</taxon>
        <taxon>Togaviridae</taxon>
        <taxon>Alphavirus</taxon>
        <taxon>Venezuelan equine encephalitis virus</taxon>
    </lineage>
</organism>
<reference key="1">
    <citation type="journal article" date="1992" name="Virology">
        <title>Genetic evidence that epizootic Venezuelan equine encephalitis (VEE) viruses may have evolved from enzootic VEE subtype I-D virus.</title>
        <authorList>
            <person name="Kinney R.M."/>
            <person name="Tsuchiya K.R."/>
            <person name="Sneider J.M."/>
            <person name="Trent D.W."/>
        </authorList>
    </citation>
    <scope>NUCLEOTIDE SEQUENCE [GENOMIC RNA]</scope>
</reference>
<reference key="2">
    <citation type="journal article" date="2006" name="Virology">
        <title>Venezuelan equine encephalitis virus entry mechanism requires late endosome formation and resists cell membrane cholesterol depletion.</title>
        <authorList>
            <person name="Kolokoltsov A.A."/>
            <person name="Fleming E.H."/>
            <person name="Davey R.A."/>
        </authorList>
    </citation>
    <scope>FUNCTION (CAPSID PROTEIN)</scope>
</reference>
<accession>P36329</accession>
<organismHost>
    <name type="scientific">Bos taurus</name>
    <name type="common">Bovine</name>
    <dbReference type="NCBI Taxonomy" id="9913"/>
</organismHost>
<organismHost>
    <name type="scientific">Didelphis marsupialis</name>
    <name type="common">Southern opossum</name>
    <dbReference type="NCBI Taxonomy" id="9268"/>
</organismHost>
<organismHost>
    <name type="scientific">Equus asinus</name>
    <name type="common">Donkey</name>
    <name type="synonym">Equus africanus asinus</name>
    <dbReference type="NCBI Taxonomy" id="9793"/>
</organismHost>
<organismHost>
    <name type="scientific">Equus caballus</name>
    <name type="common">Horse</name>
    <dbReference type="NCBI Taxonomy" id="9796"/>
</organismHost>
<organismHost>
    <name type="scientific">Homo sapiens</name>
    <name type="common">Human</name>
    <dbReference type="NCBI Taxonomy" id="9606"/>
</organismHost>
<organismHost>
    <name type="scientific">Melanoconion</name>
    <dbReference type="NCBI Taxonomy" id="53535"/>
</organismHost>
<organismHost>
    <name type="scientific">Philander opossum</name>
    <name type="common">Gray four-eyed opossum</name>
    <dbReference type="NCBI Taxonomy" id="9272"/>
</organismHost>
<organismHost>
    <name type="scientific">Proechimys</name>
    <dbReference type="NCBI Taxonomy" id="10162"/>
</organismHost>
<organismHost>
    <name type="scientific">Sigmodon hispidus</name>
    <name type="common">Hispid cotton rat</name>
    <dbReference type="NCBI Taxonomy" id="42415"/>
</organismHost>
<proteinExistence type="inferred from homology"/>
<evidence type="ECO:0000250" key="1"/>
<evidence type="ECO:0000250" key="2">
    <source>
        <dbReference type="UniProtKB" id="P03315"/>
    </source>
</evidence>
<evidence type="ECO:0000250" key="3">
    <source>
        <dbReference type="UniProtKB" id="P03316"/>
    </source>
</evidence>
<evidence type="ECO:0000250" key="4">
    <source>
        <dbReference type="UniProtKB" id="P08768"/>
    </source>
</evidence>
<evidence type="ECO:0000250" key="5">
    <source>
        <dbReference type="UniProtKB" id="P09592"/>
    </source>
</evidence>
<evidence type="ECO:0000250" key="6">
    <source>
        <dbReference type="UniProtKB" id="P13897"/>
    </source>
</evidence>
<evidence type="ECO:0000250" key="7">
    <source>
        <dbReference type="UniProtKB" id="P27284"/>
    </source>
</evidence>
<evidence type="ECO:0000250" key="8">
    <source>
        <dbReference type="UniProtKB" id="Q5XXP3"/>
    </source>
</evidence>
<evidence type="ECO:0000250" key="9">
    <source>
        <dbReference type="UniProtKB" id="Q5Y388"/>
    </source>
</evidence>
<evidence type="ECO:0000250" key="10">
    <source>
        <dbReference type="UniProtKB" id="Q86925"/>
    </source>
</evidence>
<evidence type="ECO:0000250" key="11">
    <source>
        <dbReference type="UniProtKB" id="Q8JUX5"/>
    </source>
</evidence>
<evidence type="ECO:0000255" key="12"/>
<evidence type="ECO:0000255" key="13">
    <source>
        <dbReference type="PROSITE-ProRule" id="PRU01027"/>
    </source>
</evidence>
<evidence type="ECO:0000256" key="14">
    <source>
        <dbReference type="SAM" id="MobiDB-lite"/>
    </source>
</evidence>
<evidence type="ECO:0000269" key="15">
    <source>
    </source>
</evidence>
<evidence type="ECO:0000305" key="16"/>
<keyword id="KW-0167">Capsid protein</keyword>
<keyword id="KW-1165">Clathrin-mediated endocytosis of virus by host</keyword>
<keyword id="KW-0165">Cleavage on pair of basic residues</keyword>
<keyword id="KW-1015">Disulfide bond</keyword>
<keyword id="KW-1262">Eukaryotic host gene expression shutoff by virus</keyword>
<keyword id="KW-1191">Eukaryotic host transcription shutoff by virus</keyword>
<keyword id="KW-1170">Fusion of virus membrane with host endosomal membrane</keyword>
<keyword id="KW-1168">Fusion of virus membrane with host membrane</keyword>
<keyword id="KW-0325">Glycoprotein</keyword>
<keyword id="KW-1032">Host cell membrane</keyword>
<keyword id="KW-1035">Host cytoplasm</keyword>
<keyword id="KW-1038">Host endoplasmic reticulum</keyword>
<keyword id="KW-1190">Host gene expression shutoff by virus</keyword>
<keyword id="KW-1040">Host Golgi apparatus</keyword>
<keyword id="KW-1043">Host membrane</keyword>
<keyword id="KW-1048">Host nucleus</keyword>
<keyword id="KW-0945">Host-virus interaction</keyword>
<keyword id="KW-0378">Hydrolase</keyword>
<keyword id="KW-0407">Ion channel</keyword>
<keyword id="KW-0406">Ion transport</keyword>
<keyword id="KW-0449">Lipoprotein</keyword>
<keyword id="KW-0472">Membrane</keyword>
<keyword id="KW-0564">Palmitate</keyword>
<keyword id="KW-0597">Phosphoprotein</keyword>
<keyword id="KW-0645">Protease</keyword>
<keyword id="KW-0694">RNA-binding</keyword>
<keyword id="KW-0720">Serine protease</keyword>
<keyword id="KW-1144">T=4 icosahedral capsid protein</keyword>
<keyword id="KW-0812">Transmembrane</keyword>
<keyword id="KW-1133">Transmembrane helix</keyword>
<keyword id="KW-0813">Transport</keyword>
<keyword id="KW-1161">Viral attachment to host cell</keyword>
<keyword id="KW-1234">Viral attachment to host entry receptor</keyword>
<keyword id="KW-0261">Viral envelope protein</keyword>
<keyword id="KW-1182">Viral ion channel</keyword>
<keyword id="KW-1162">Viral penetration into host cytoplasm</keyword>
<keyword id="KW-0946">Virion</keyword>
<keyword id="KW-1164">Virus endocytosis by host</keyword>
<keyword id="KW-1160">Virus entry into host cell</keyword>
<sequence length="1255" mass="138298">MFPFQPMYPMQPMPYRNPFAAPRRPWFPRTDPFLAMQVQELTRSMANLTFKQRREAPPEGPPAKKPKREAPQKQKGGGQGKKKKNQGKKKAKTGPPNPKAQNGNKKKTNKKPGKRQRMVMKLESDKTFPIMLEGKINGYACVVGGKLFRPMHVEGKIDNDVLAALKTKKASKYDLEYADVPQNMRADTFKYTHEKPQGYYSWHHGAVQYENGRFTVPKGVGAKGDSGRPILDNQGRVVAIVLGGVNEGSRTALSVVMWNEKGVTVKYTPENCEQWSLVTTMCLLANVTFPCAQPPICYDRKPAETLAMLSVNVDNPGYDELLEAAVKCPGRKRRSTEELFKEYKLTRPYMARCIRCAVGSCHSPIAIEAVKSDGHDGYVRLQTSSQYGLDSSGNLKGRTMRYDMHGTIEEIPLHQVSLHTSRPCHIVDGHGYFLLARCPAGDSITMEFKKDAVTHSCSVPYEVKFNPVGRELYTHPPEHGAEQACQVYAHDAQNRGAYVEMHLPGSEVDSSLVSLSGSSVTVTPPAGTSALVECECGGTKISETINTAKQFSQCTKKEQCRAYRLQNDKWVYNSDKLPKAAGATLKGKLHVPFLLADGKCTVPLAPEPMITFGFRSVSLKLHPKNPTYLTTRQLADEPHYTHELISEPVVRNFSVTEKGWEFVWGNHPPKRFWAQETAPGNPHGLPHEVITHYYHRYPMSTILGLSICAAIVTVSIAASTWLLCKSRVSCLTPYRLTPNARMPLCLAVLCCARTARAETTWESLDHLWNNNQQMFWIQLLIPLAALIVVTRLLRCVCCVVPFLVVAGAAGAGAYEHATTMPSQAGIPYNTIVNRAGYAPLPISITPTKIKLIPTVNLEYVTCHYKTGMDSPAIKCCGSQECTPTYRPDEQCKVFTGVYPFMWGGAYCFCDTENTQVSKAYVMKSDDCLADHAEAYKAHTASVQAFLNITVGEHSIVTTVYVNGETPVNFNGVKLTAGPLSTAWTPFDRKIVQYAGEIYNYDFPEYGAGQPGAFGDIQSRTVSSSDLYANTNLVLQRPKAGAIHVPYTQAPSGFEQWKKDKAPSLKFTAPFGCEIYTNPIRAENCAVGSIPLAFDIPDALFTRVSETPTLSAAECTLNECVYSSDFGGIATVKYSASKSGKCAVHVPSGTATLKEAAIELAEQGSATIHFSTANIHPEFRLQICTSYVTCKGDCHPPKDHIVTHPQYHAQTFTAAVSKTAWTWLTSLLGGSAVIIIIGLVLATIVAMYVLTNQKHN</sequence>
<comment type="function">
    <molecule>Capsid protein</molecule>
    <text evidence="2 3 5 7 15">Forms an icosahedral capsid with a T=4 symmetry composed of 240 copies of the capsid protein surrounded by a lipid membrane through which penetrate 80 spikes composed of trimers of E1-E2 heterodimers (By similarity). The capsid protein binds to the viral RNA genome at a site adjacent to a ribosome binding site for viral genome translation following genome release (By similarity). Possesses a protease activity that results in its autocatalytic cleavage from the nascent structural protein (By similarity). Following its self-cleavage, the capsid protein transiently associates with ribosomes, and within several minutes the protein binds to viral RNA and rapidly assembles into icosahedric core particles (By similarity). The resulting nucleocapsid eventually associates with the cytoplasmic domain of the spike glycoprotein E2 at the cell membrane, leading to budding and formation of mature virions (By similarity). In case of infection, new virions attach to target cells and after clathrin-mediated endocytosis their membrane fuses with the host endosomal membrane (PubMed:16427678). This leads to the release of the nucleocapsid into the cytoplasm, followed by an uncoating event necessary for the genomic RNA to become accessible (By similarity). The uncoating might be triggered by the interaction of capsid proteins with ribosomes (By similarity). Binding of ribosomes would release the genomic RNA since the same region is genomic RNA-binding and ribosome-binding (By similarity). Specifically inhibits interleukin-1 receptor-associated kinase 1/IRAK1-dependent signaling during viral entry, representing a means by which the alphaviruses may evade innate immune detection and activation prior to viral gene expression (By similarity). Inhibits host transcription (By similarity). Forms a tetrameric complex with XPO1/CRM1 and the nuclear import receptor importin (By similarity). This complex blocks the central channel of host nuclear pores thereby inhibiting the receptor-mediated nuclear transport and thus the host mRNA and rRNA transcription (By similarity). The inhibition of transcription is linked to a cytopathic effect on the host cell (By similarity).</text>
</comment>
<comment type="function">
    <molecule>Assembly protein E3</molecule>
    <text evidence="2">Provides the signal sequence for the translocation of the precursor of protein E3/E2 to the host endoplasmic reticulum. Furin-cleaved E3 remains associated with spike glycoprotein E1 and mediates pH protection of the latter during the transport via the secretory pathway. After virion release from the host cell, the assembly protein E3 is gradually released in the extracellular space.</text>
</comment>
<comment type="function">
    <molecule>Spike glycoprotein E2</molecule>
    <text evidence="2 5">Plays a role in viral attachment to target host cell, by binding to the cell receptor LDLRAD3 (By similarity). Synthesized as a p62 precursor which is processed by furin at the cell membrane just before virion budding, giving rise to E2-E1 heterodimer. The p62-E1 heterodimer is stable, whereas E2-E1 is unstable and dissociate at low pH. p62 is processed at the last step, presumably to avoid E1 fusion activation before its final export to cell surface. E2 C-terminus contains a transitory transmembrane that would be disrupted by palmitoylation, resulting in reorientation of the C-terminal tail from lumenal to cytoplasmic side. This step is critical since E2 C-terminus is involved in budding by interacting with capsid proteins. This release of E2 C-terminus in cytoplasm occurs lately in protein export, and precludes premature assembly of particles at the endoplasmic reticulum membrane.</text>
</comment>
<comment type="function">
    <molecule>6K protein</molecule>
    <text evidence="2 3">Acts as a viroporin that participates in virus glycoprotein processing and transport to the plasma membrane, cell permeabilization and budding of viral particles (By similarity). Disrupts the calcium homeostasis of the cell, probably at the endoplasmic reticulum level (By similarity). This leads to cytoplasmic calcium elevation (By similarity). Because of its lipophilic properties, the 6K protein is postulated to influence the selection of lipids that interact with the transmembrane domains of the glycoproteins, which, in turn, affects the deformability of the bilayer required for the extreme curvature that occurs as budding proceeds. Present in low amount in virions, about 3% compared to viral glycoproteins (By similarity).</text>
</comment>
<comment type="function">
    <molecule>Spike glycoprotein E1</molecule>
    <text evidence="3 5">Class II viral fusion protein. Fusion activity is inactive as long as E1 is bound to E2 in mature virion. After virus attachment to cell receptor LDLRAD3 and endocytosis, acidification of the endosome induce dissociation of E1/E2 heterodimer and concomitant trimerization of the E1 subunits (By similarity). This E1 trimer is fusion active, and promotes release of viral nucleocapsid in cytoplasm after endosome and viral membrane fusion. Efficient fusion requires the presence of cholesterol and sphingolipid in the target membrane (By similarity).</text>
</comment>
<comment type="catalytic activity">
    <reaction evidence="3">
        <text>Autocatalytic release of the core protein from the N-terminus of the togavirus structural polyprotein by hydrolysis of a -Trp-|-Ser- bond.</text>
        <dbReference type="EC" id="3.4.21.90"/>
    </reaction>
</comment>
<comment type="subunit">
    <molecule>Capsid protein</molecule>
    <text evidence="3 5 10 11">Homodimer (By similarity). Homomultimer (By similarity). Interacts with host karyopherin KPNA4; this interaction allows the nuclear import of the viral capsid protein (By similarity). Interacts with spike glycoprotein E2 (By similarity). Interacts with host IRAK1; the interaction leads to inhibition of IRAK1-dependent signaling (By similarity). Part of a tetrameric complex composed of host CRM1, host importin alpha/beta dimer and the viral capsid; this complex blocks the receptor-mediated transport through the nuclear pore (By similarity). Interacts with host phosphatase PPP1CA; this interaction dephosphorylates the capsid protein, which increases its ability to bind to the viral genome (By similarity).</text>
</comment>
<comment type="subunit">
    <molecule>Precursor of protein E3/E2</molecule>
    <text evidence="2 3 5">The precursor of protein E3/E2 and E1 form a heterodimer shortly after synthesis (By similarity).</text>
</comment>
<comment type="subunit">
    <molecule>Spike glycoprotein E1</molecule>
    <text evidence="3 5 11">Interacts with spike glycoprotein E2 (By similarity). The precursor of protein E3/E2 and E1 form a heterodimer shortly after synthesis (By similarity). Processing of the precursor of protein E3/E2 into E2 and E3 results in a heterodimer of the spike glycoproteins E2 and E1 (By similarity). Spike at virion surface are constituted of three E2-E1 heterodimers (By similarity). After target cell attachment and endocytosis, E1 change conformation to form homotrimers (By similarity). Interacts with 6K protein (By similarity). Interacts with host LDLRAD3; this interaction mediates viral entry to the host cell (By similarity).</text>
</comment>
<comment type="subunit">
    <molecule>Spike glycoprotein E2</molecule>
    <text evidence="3 5">Interacts with spike glycoprotein E1 (By similarity). Processing of the precursor of protein E3/E2 into E2 and E3 results in a heterodimer of the spike glycoproteins E2 and E1 (By similarity). Spike at virion surface are constituted of a trimer of E2-E1 heterodimers (By similarity). Interacts with 6K protein (By similarity). Interacts with host LDLRAD3; this interaction mediates viral entry to the host cell (By similarity).</text>
</comment>
<comment type="subunit">
    <molecule>6K protein</molecule>
    <text evidence="3 8">Oligomer (By similarity). Interacts with spike glycoprotein E1. Interacts with spike glycoprotein E2 (By similarity).</text>
</comment>
<comment type="subcellular location">
    <molecule>Capsid protein</molecule>
    <subcellularLocation>
        <location evidence="3">Virion</location>
    </subcellularLocation>
    <subcellularLocation>
        <location evidence="5">Host cytoplasm</location>
    </subcellularLocation>
    <subcellularLocation>
        <location evidence="3">Host cell membrane</location>
    </subcellularLocation>
    <subcellularLocation>
        <location evidence="5">Host nucleus</location>
    </subcellularLocation>
</comment>
<comment type="subcellular location">
    <molecule>Spike glycoprotein E2</molecule>
    <subcellularLocation>
        <location evidence="11">Virion membrane</location>
        <topology evidence="12">Single-pass type I membrane protein</topology>
    </subcellularLocation>
    <subcellularLocation>
        <location evidence="3">Host cell membrane</location>
        <topology evidence="11">Single-pass type I membrane protein</topology>
    </subcellularLocation>
</comment>
<comment type="subcellular location">
    <molecule>6K protein</molecule>
    <subcellularLocation>
        <location evidence="3">Host cell membrane</location>
        <topology evidence="12">Multi-pass membrane protein</topology>
    </subcellularLocation>
    <subcellularLocation>
        <location evidence="3">Virion membrane</location>
        <topology evidence="12">Multi-pass membrane protein</topology>
    </subcellularLocation>
    <subcellularLocation>
        <location evidence="3">Host Golgi apparatus</location>
    </subcellularLocation>
    <subcellularLocation>
        <location>Host Golgi apparatus</location>
        <location>Host trans-Golgi network</location>
    </subcellularLocation>
    <subcellularLocation>
        <location evidence="3">Host endoplasmic reticulum</location>
    </subcellularLocation>
</comment>
<comment type="subcellular location">
    <molecule>Spike glycoprotein E1</molecule>
    <subcellularLocation>
        <location evidence="11">Virion membrane</location>
        <topology evidence="12">Single-pass type I membrane protein</topology>
    </subcellularLocation>
    <subcellularLocation>
        <location evidence="3 11">Host cell membrane</location>
        <topology evidence="12">Single-pass type I membrane protein</topology>
    </subcellularLocation>
</comment>
<comment type="domain">
    <text evidence="2">Structural polyprotein: As soon as the capsid protein has been autocleaved, an internal uncleaved signal peptide directs the remaining polyprotein to the endoplasmic reticulum.</text>
</comment>
<comment type="domain">
    <molecule>Capsid protein</molecule>
    <text evidence="3 5">The very N-terminus plays a role in the particle assembly process (By similarity). The N-terminus also contains a nuclear localization signal and a supraphysiological nuclear export signal (supraNES), which is an unusually strong NES that mediates host CRM1 binding in the absence of RanGTP and thus can bind CRM1, not only in the nucleus, but also in the cytoplasm (By similarity). The C-terminus functions as a protease during translation to cleave itself from the translating structural polyprotein (By similarity).</text>
</comment>
<comment type="PTM">
    <text evidence="2">Structural polyprotein: Specific enzymatic cleavages in vivo yield mature proteins. Capsid protein is auto-cleaved during polyprotein translation, unmasking a signal peptide at the N-terminus of the precursor of E3/E2. The remaining polyprotein is then targeted to the host endoplasmic reticulum, where host signal peptidase cleaves it into pE2, 6K and E1 proteins. pE2 is further processed to mature E3 and E2 by host furin in trans-Golgi vesicle.</text>
</comment>
<comment type="PTM">
    <molecule>Capsid protein</molecule>
    <text evidence="5">Phosphorylated on serine and threonine residues.</text>
</comment>
<comment type="PTM">
    <molecule>Spike glycoprotein E2</molecule>
    <text evidence="2">Palmitoylated via thioester bonds. These palmitoylations may induce disruption of the C-terminus transmembrane. This would result in the reorientation of E2 C-terminus from lumenal to cytoplasmic side.</text>
</comment>
<comment type="PTM">
    <molecule>Spike glycoprotein E1</molecule>
    <text evidence="2">N-glycosylated.</text>
</comment>
<comment type="PTM">
    <molecule>Spike glycoprotein E2</molecule>
    <text evidence="2">N-glycosylated.</text>
</comment>
<comment type="PTM">
    <molecule>Assembly protein E3</molecule>
    <text evidence="2">N-glycosylated.</text>
</comment>
<comment type="PTM">
    <molecule>6K protein</molecule>
    <text evidence="2">Palmitoylated via thioester bonds.</text>
</comment>
<comment type="miscellaneous">
    <text evidence="16">Belongs to the New World alphaviruses that can cause fatal encephalitis.</text>
</comment>
<comment type="miscellaneous">
    <text evidence="10">Structural polyprotein: Translated from a subgenomic RNA synthesized during togavirus replication.</text>
</comment>
<name>POLS_EEVV3</name>